<name>UVRC_STRP1</name>
<proteinExistence type="inferred from homology"/>
<gene>
    <name evidence="1" type="primary">uvrC</name>
    <name type="ordered locus">SPy_1068</name>
    <name type="ordered locus">M5005_Spy0791</name>
</gene>
<evidence type="ECO:0000255" key="1">
    <source>
        <dbReference type="HAMAP-Rule" id="MF_00203"/>
    </source>
</evidence>
<reference key="1">
    <citation type="journal article" date="2001" name="Proc. Natl. Acad. Sci. U.S.A.">
        <title>Complete genome sequence of an M1 strain of Streptococcus pyogenes.</title>
        <authorList>
            <person name="Ferretti J.J."/>
            <person name="McShan W.M."/>
            <person name="Ajdic D.J."/>
            <person name="Savic D.J."/>
            <person name="Savic G."/>
            <person name="Lyon K."/>
            <person name="Primeaux C."/>
            <person name="Sezate S."/>
            <person name="Suvorov A.N."/>
            <person name="Kenton S."/>
            <person name="Lai H.S."/>
            <person name="Lin S.P."/>
            <person name="Qian Y."/>
            <person name="Jia H.G."/>
            <person name="Najar F.Z."/>
            <person name="Ren Q."/>
            <person name="Zhu H."/>
            <person name="Song L."/>
            <person name="White J."/>
            <person name="Yuan X."/>
            <person name="Clifton S.W."/>
            <person name="Roe B.A."/>
            <person name="McLaughlin R.E."/>
        </authorList>
    </citation>
    <scope>NUCLEOTIDE SEQUENCE [LARGE SCALE GENOMIC DNA]</scope>
    <source>
        <strain>ATCC 700294 / SF370 / Serotype M1</strain>
    </source>
</reference>
<reference key="2">
    <citation type="journal article" date="2005" name="J. Infect. Dis.">
        <title>Evolutionary origin and emergence of a highly successful clone of serotype M1 group A Streptococcus involved multiple horizontal gene transfer events.</title>
        <authorList>
            <person name="Sumby P."/>
            <person name="Porcella S.F."/>
            <person name="Madrigal A.G."/>
            <person name="Barbian K.D."/>
            <person name="Virtaneva K."/>
            <person name="Ricklefs S.M."/>
            <person name="Sturdevant D.E."/>
            <person name="Graham M.R."/>
            <person name="Vuopio-Varkila J."/>
            <person name="Hoe N.P."/>
            <person name="Musser J.M."/>
        </authorList>
    </citation>
    <scope>NUCLEOTIDE SEQUENCE [LARGE SCALE GENOMIC DNA]</scope>
    <source>
        <strain>ATCC BAA-947 / MGAS5005 / Serotype M1</strain>
    </source>
</reference>
<feature type="chain" id="PRO_0000138348" description="UvrABC system protein C">
    <location>
        <begin position="1"/>
        <end position="598"/>
    </location>
</feature>
<feature type="domain" description="GIY-YIG" evidence="1">
    <location>
        <begin position="14"/>
        <end position="91"/>
    </location>
</feature>
<feature type="domain" description="UVR" evidence="1">
    <location>
        <begin position="196"/>
        <end position="231"/>
    </location>
</feature>
<keyword id="KW-0963">Cytoplasm</keyword>
<keyword id="KW-0227">DNA damage</keyword>
<keyword id="KW-0228">DNA excision</keyword>
<keyword id="KW-0234">DNA repair</keyword>
<keyword id="KW-0267">Excision nuclease</keyword>
<keyword id="KW-1185">Reference proteome</keyword>
<keyword id="KW-0742">SOS response</keyword>
<accession>Q99ZU3</accession>
<accession>Q48Z09</accession>
<organism>
    <name type="scientific">Streptococcus pyogenes serotype M1</name>
    <dbReference type="NCBI Taxonomy" id="301447"/>
    <lineage>
        <taxon>Bacteria</taxon>
        <taxon>Bacillati</taxon>
        <taxon>Bacillota</taxon>
        <taxon>Bacilli</taxon>
        <taxon>Lactobacillales</taxon>
        <taxon>Streptococcaceae</taxon>
        <taxon>Streptococcus</taxon>
    </lineage>
</organism>
<sequence>MNELIKHKLELLPDSPGCYLHKDKEGTIIYVGKAKNLKKRVRSYFRGSHDTKTELLVSEIVDFEYIVTESDTEALLLEINLIQKNMPKYNIKLKDDKSYPFLKITNESFPRLVITRYIKKNDGLYFGPYPDSYTANEVKKLLDRIFPFKKCKNPINKVCFYYHLGQCCAHTICHTDKAYWDRLIDDVKHFLNGKDDKIIEDLRSKMLAASKEMAFERAAEYRDLISGIATMRTKQRVMSKDLQDRDIFGYYVDKGWMCVQVFFVRQGKLIQRDVNLFPYYTDAEEDFLTYMGQFYQDKQHFIPKEVFIPEAIDEELVAAIVPTKIIKPKRGEKKQLVALATKNARVSLQQKFDLLEKDIKKTSGAIENLGQLLRIDKPVRIEAFDNSNIQGTSPVAAMVVFVDGKPSKKDYRKFKIKTVVGPDDYASMREVLFRRYSRVKKEGLQAPNLIIVDGGVGQVNVAKDVIEKQLGLTIPVAGLQKNDKHQTHDLLFGNPLEVVPLPRRSEEFFLLHRIQDEVHRFAVTFHRQVRRKNSFSSTLDHISGLGPKRKQLLLRHFKTITAIASATSEEIQALGIPKTVVEAIQQQITDNKNDRSSP</sequence>
<comment type="function">
    <text evidence="1">The UvrABC repair system catalyzes the recognition and processing of DNA lesions. UvrC both incises the 5' and 3' sides of the lesion. The N-terminal half is responsible for the 3' incision and the C-terminal half is responsible for the 5' incision.</text>
</comment>
<comment type="subunit">
    <text evidence="1">Interacts with UvrB in an incision complex.</text>
</comment>
<comment type="subcellular location">
    <subcellularLocation>
        <location evidence="1">Cytoplasm</location>
    </subcellularLocation>
</comment>
<comment type="similarity">
    <text evidence="1">Belongs to the UvrC family.</text>
</comment>
<protein>
    <recommendedName>
        <fullName evidence="1">UvrABC system protein C</fullName>
        <shortName evidence="1">Protein UvrC</shortName>
    </recommendedName>
    <alternativeName>
        <fullName evidence="1">Excinuclease ABC subunit C</fullName>
    </alternativeName>
</protein>
<dbReference type="EMBL" id="AE004092">
    <property type="protein sequence ID" value="AAK33955.1"/>
    <property type="molecule type" value="Genomic_DNA"/>
</dbReference>
<dbReference type="EMBL" id="CP000017">
    <property type="protein sequence ID" value="AAZ51409.1"/>
    <property type="molecule type" value="Genomic_DNA"/>
</dbReference>
<dbReference type="RefSeq" id="NP_269234.1">
    <property type="nucleotide sequence ID" value="NC_002737.2"/>
</dbReference>
<dbReference type="SMR" id="Q99ZU3"/>
<dbReference type="PaxDb" id="1314-HKU360_00855"/>
<dbReference type="KEGG" id="spy:SPy_1068"/>
<dbReference type="KEGG" id="spz:M5005_Spy0791"/>
<dbReference type="PATRIC" id="fig|160490.10.peg.923"/>
<dbReference type="HOGENOM" id="CLU_014841_3_2_9"/>
<dbReference type="OMA" id="HIECFDN"/>
<dbReference type="Proteomes" id="UP000000750">
    <property type="component" value="Chromosome"/>
</dbReference>
<dbReference type="GO" id="GO:0005737">
    <property type="term" value="C:cytoplasm"/>
    <property type="evidence" value="ECO:0007669"/>
    <property type="project" value="UniProtKB-SubCell"/>
</dbReference>
<dbReference type="GO" id="GO:0009380">
    <property type="term" value="C:excinuclease repair complex"/>
    <property type="evidence" value="ECO:0007669"/>
    <property type="project" value="InterPro"/>
</dbReference>
<dbReference type="GO" id="GO:0003677">
    <property type="term" value="F:DNA binding"/>
    <property type="evidence" value="ECO:0007669"/>
    <property type="project" value="UniProtKB-UniRule"/>
</dbReference>
<dbReference type="GO" id="GO:0009381">
    <property type="term" value="F:excinuclease ABC activity"/>
    <property type="evidence" value="ECO:0007669"/>
    <property type="project" value="UniProtKB-UniRule"/>
</dbReference>
<dbReference type="GO" id="GO:0006289">
    <property type="term" value="P:nucleotide-excision repair"/>
    <property type="evidence" value="ECO:0007669"/>
    <property type="project" value="UniProtKB-UniRule"/>
</dbReference>
<dbReference type="GO" id="GO:0009432">
    <property type="term" value="P:SOS response"/>
    <property type="evidence" value="ECO:0007669"/>
    <property type="project" value="UniProtKB-UniRule"/>
</dbReference>
<dbReference type="CDD" id="cd10434">
    <property type="entry name" value="GIY-YIG_UvrC_Cho"/>
    <property type="match status" value="1"/>
</dbReference>
<dbReference type="FunFam" id="3.30.420.340:FF:000002">
    <property type="entry name" value="UvrABC system protein C"/>
    <property type="match status" value="1"/>
</dbReference>
<dbReference type="FunFam" id="3.40.1440.10:FF:000001">
    <property type="entry name" value="UvrABC system protein C"/>
    <property type="match status" value="1"/>
</dbReference>
<dbReference type="Gene3D" id="1.10.150.20">
    <property type="entry name" value="5' to 3' exonuclease, C-terminal subdomain"/>
    <property type="match status" value="1"/>
</dbReference>
<dbReference type="Gene3D" id="3.40.1440.10">
    <property type="entry name" value="GIY-YIG endonuclease"/>
    <property type="match status" value="1"/>
</dbReference>
<dbReference type="Gene3D" id="4.10.860.10">
    <property type="entry name" value="UVR domain"/>
    <property type="match status" value="1"/>
</dbReference>
<dbReference type="Gene3D" id="3.30.420.340">
    <property type="entry name" value="UvrC, RNAse H endonuclease domain"/>
    <property type="match status" value="1"/>
</dbReference>
<dbReference type="HAMAP" id="MF_00203">
    <property type="entry name" value="UvrC"/>
    <property type="match status" value="1"/>
</dbReference>
<dbReference type="InterPro" id="IPR000305">
    <property type="entry name" value="GIY-YIG_endonuc"/>
</dbReference>
<dbReference type="InterPro" id="IPR035901">
    <property type="entry name" value="GIY-YIG_endonuc_sf"/>
</dbReference>
<dbReference type="InterPro" id="IPR047296">
    <property type="entry name" value="GIY-YIG_UvrC_Cho"/>
</dbReference>
<dbReference type="InterPro" id="IPR010994">
    <property type="entry name" value="RuvA_2-like"/>
</dbReference>
<dbReference type="InterPro" id="IPR001943">
    <property type="entry name" value="UVR_dom"/>
</dbReference>
<dbReference type="InterPro" id="IPR036876">
    <property type="entry name" value="UVR_dom_sf"/>
</dbReference>
<dbReference type="InterPro" id="IPR050066">
    <property type="entry name" value="UvrABC_protein_C"/>
</dbReference>
<dbReference type="InterPro" id="IPR004791">
    <property type="entry name" value="UvrC"/>
</dbReference>
<dbReference type="InterPro" id="IPR001162">
    <property type="entry name" value="UvrC_RNase_H_dom"/>
</dbReference>
<dbReference type="InterPro" id="IPR038476">
    <property type="entry name" value="UvrC_RNase_H_dom_sf"/>
</dbReference>
<dbReference type="NCBIfam" id="TIGR00194">
    <property type="entry name" value="uvrC"/>
    <property type="match status" value="1"/>
</dbReference>
<dbReference type="PANTHER" id="PTHR30562:SF1">
    <property type="entry name" value="UVRABC SYSTEM PROTEIN C"/>
    <property type="match status" value="1"/>
</dbReference>
<dbReference type="PANTHER" id="PTHR30562">
    <property type="entry name" value="UVRC/OXIDOREDUCTASE"/>
    <property type="match status" value="1"/>
</dbReference>
<dbReference type="Pfam" id="PF01541">
    <property type="entry name" value="GIY-YIG"/>
    <property type="match status" value="1"/>
</dbReference>
<dbReference type="Pfam" id="PF14520">
    <property type="entry name" value="HHH_5"/>
    <property type="match status" value="1"/>
</dbReference>
<dbReference type="Pfam" id="PF02151">
    <property type="entry name" value="UVR"/>
    <property type="match status" value="1"/>
</dbReference>
<dbReference type="Pfam" id="PF22920">
    <property type="entry name" value="UvrC_RNaseH"/>
    <property type="match status" value="1"/>
</dbReference>
<dbReference type="Pfam" id="PF08459">
    <property type="entry name" value="UvrC_RNaseH_dom"/>
    <property type="match status" value="1"/>
</dbReference>
<dbReference type="SMART" id="SM00465">
    <property type="entry name" value="GIYc"/>
    <property type="match status" value="1"/>
</dbReference>
<dbReference type="SUPFAM" id="SSF46600">
    <property type="entry name" value="C-terminal UvrC-binding domain of UvrB"/>
    <property type="match status" value="1"/>
</dbReference>
<dbReference type="SUPFAM" id="SSF82771">
    <property type="entry name" value="GIY-YIG endonuclease"/>
    <property type="match status" value="1"/>
</dbReference>
<dbReference type="SUPFAM" id="SSF47781">
    <property type="entry name" value="RuvA domain 2-like"/>
    <property type="match status" value="1"/>
</dbReference>
<dbReference type="PROSITE" id="PS50164">
    <property type="entry name" value="GIY_YIG"/>
    <property type="match status" value="1"/>
</dbReference>
<dbReference type="PROSITE" id="PS50151">
    <property type="entry name" value="UVR"/>
    <property type="match status" value="1"/>
</dbReference>
<dbReference type="PROSITE" id="PS50165">
    <property type="entry name" value="UVRC"/>
    <property type="match status" value="1"/>
</dbReference>